<organism>
    <name type="scientific">Bacillus cereus (strain Q1)</name>
    <dbReference type="NCBI Taxonomy" id="361100"/>
    <lineage>
        <taxon>Bacteria</taxon>
        <taxon>Bacillati</taxon>
        <taxon>Bacillota</taxon>
        <taxon>Bacilli</taxon>
        <taxon>Bacillales</taxon>
        <taxon>Bacillaceae</taxon>
        <taxon>Bacillus</taxon>
        <taxon>Bacillus cereus group</taxon>
    </lineage>
</organism>
<protein>
    <recommendedName>
        <fullName evidence="1">LexA repressor</fullName>
        <ecNumber evidence="1">3.4.21.88</ecNumber>
    </recommendedName>
</protein>
<keyword id="KW-0068">Autocatalytic cleavage</keyword>
<keyword id="KW-0227">DNA damage</keyword>
<keyword id="KW-0234">DNA repair</keyword>
<keyword id="KW-0235">DNA replication</keyword>
<keyword id="KW-0238">DNA-binding</keyword>
<keyword id="KW-0378">Hydrolase</keyword>
<keyword id="KW-0678">Repressor</keyword>
<keyword id="KW-0742">SOS response</keyword>
<keyword id="KW-0804">Transcription</keyword>
<keyword id="KW-0805">Transcription regulation</keyword>
<proteinExistence type="inferred from homology"/>
<feature type="chain" id="PRO_1000116595" description="LexA repressor">
    <location>
        <begin position="1"/>
        <end position="206"/>
    </location>
</feature>
<feature type="DNA-binding region" description="H-T-H motif" evidence="1">
    <location>
        <begin position="28"/>
        <end position="48"/>
    </location>
</feature>
<feature type="active site" description="For autocatalytic cleavage activity" evidence="1">
    <location>
        <position position="128"/>
    </location>
</feature>
<feature type="active site" description="For autocatalytic cleavage activity" evidence="1">
    <location>
        <position position="166"/>
    </location>
</feature>
<feature type="site" description="Cleavage; by autolysis" evidence="1">
    <location>
        <begin position="92"/>
        <end position="93"/>
    </location>
</feature>
<reference key="1">
    <citation type="journal article" date="2009" name="J. Bacteriol.">
        <title>Complete genome sequence of the extremophilic Bacillus cereus strain Q1 with industrial applications.</title>
        <authorList>
            <person name="Xiong Z."/>
            <person name="Jiang Y."/>
            <person name="Qi D."/>
            <person name="Lu H."/>
            <person name="Yang F."/>
            <person name="Yang J."/>
            <person name="Chen L."/>
            <person name="Sun L."/>
            <person name="Xu X."/>
            <person name="Xue Y."/>
            <person name="Zhu Y."/>
            <person name="Jin Q."/>
        </authorList>
    </citation>
    <scope>NUCLEOTIDE SEQUENCE [LARGE SCALE GENOMIC DNA]</scope>
    <source>
        <strain>Q1</strain>
    </source>
</reference>
<comment type="function">
    <text evidence="1">Represses a number of genes involved in the response to DNA damage (SOS response), including recA and lexA. In the presence of single-stranded DNA, RecA interacts with LexA causing an autocatalytic cleavage which disrupts the DNA-binding part of LexA, leading to derepression of the SOS regulon and eventually DNA repair.</text>
</comment>
<comment type="catalytic activity">
    <reaction evidence="1">
        <text>Hydrolysis of Ala-|-Gly bond in repressor LexA.</text>
        <dbReference type="EC" id="3.4.21.88"/>
    </reaction>
</comment>
<comment type="subunit">
    <text evidence="1">Homodimer.</text>
</comment>
<comment type="similarity">
    <text evidence="1">Belongs to the peptidase S24 family.</text>
</comment>
<gene>
    <name evidence="1" type="primary">lexA</name>
    <name type="ordered locus">BCQ_3494</name>
</gene>
<sequence>MEKLTKRQQDILDFIKLKVQEKGYPPSVREIGQAVGLASSSTVHGHLSRLEEKGYIRRDPTKPRAIEILGEDRMDTETQSVIQVPIVGKVTAGLPITAVESVEEHFPLPASIVAGADQVFMLRISGDSMIEAGIFDGDLVVVRQQQSAYNGEIVVALTEDNEATVKRFYKEKDHFRLQPENSSLEPIILKQVSVIGKVIGVYRDLH</sequence>
<dbReference type="EC" id="3.4.21.88" evidence="1"/>
<dbReference type="EMBL" id="CP000227">
    <property type="protein sequence ID" value="ACM13922.1"/>
    <property type="molecule type" value="Genomic_DNA"/>
</dbReference>
<dbReference type="SMR" id="B9IUL2"/>
<dbReference type="MEROPS" id="S24.001"/>
<dbReference type="KEGG" id="bcq:BCQ_3494"/>
<dbReference type="HOGENOM" id="CLU_066192_45_1_9"/>
<dbReference type="Proteomes" id="UP000000441">
    <property type="component" value="Chromosome"/>
</dbReference>
<dbReference type="GO" id="GO:0003677">
    <property type="term" value="F:DNA binding"/>
    <property type="evidence" value="ECO:0007669"/>
    <property type="project" value="UniProtKB-UniRule"/>
</dbReference>
<dbReference type="GO" id="GO:0004252">
    <property type="term" value="F:serine-type endopeptidase activity"/>
    <property type="evidence" value="ECO:0007669"/>
    <property type="project" value="UniProtKB-UniRule"/>
</dbReference>
<dbReference type="GO" id="GO:0006281">
    <property type="term" value="P:DNA repair"/>
    <property type="evidence" value="ECO:0007669"/>
    <property type="project" value="UniProtKB-UniRule"/>
</dbReference>
<dbReference type="GO" id="GO:0006260">
    <property type="term" value="P:DNA replication"/>
    <property type="evidence" value="ECO:0007669"/>
    <property type="project" value="UniProtKB-UniRule"/>
</dbReference>
<dbReference type="GO" id="GO:0045892">
    <property type="term" value="P:negative regulation of DNA-templated transcription"/>
    <property type="evidence" value="ECO:0007669"/>
    <property type="project" value="UniProtKB-UniRule"/>
</dbReference>
<dbReference type="GO" id="GO:0006508">
    <property type="term" value="P:proteolysis"/>
    <property type="evidence" value="ECO:0007669"/>
    <property type="project" value="InterPro"/>
</dbReference>
<dbReference type="GO" id="GO:0009432">
    <property type="term" value="P:SOS response"/>
    <property type="evidence" value="ECO:0007669"/>
    <property type="project" value="UniProtKB-UniRule"/>
</dbReference>
<dbReference type="CDD" id="cd00090">
    <property type="entry name" value="HTH_ARSR"/>
    <property type="match status" value="1"/>
</dbReference>
<dbReference type="CDD" id="cd06529">
    <property type="entry name" value="S24_LexA-like"/>
    <property type="match status" value="1"/>
</dbReference>
<dbReference type="FunFam" id="1.10.10.10:FF:000009">
    <property type="entry name" value="LexA repressor"/>
    <property type="match status" value="1"/>
</dbReference>
<dbReference type="FunFam" id="2.10.109.10:FF:000001">
    <property type="entry name" value="LexA repressor"/>
    <property type="match status" value="1"/>
</dbReference>
<dbReference type="Gene3D" id="2.10.109.10">
    <property type="entry name" value="Umud Fragment, subunit A"/>
    <property type="match status" value="1"/>
</dbReference>
<dbReference type="Gene3D" id="1.10.10.10">
    <property type="entry name" value="Winged helix-like DNA-binding domain superfamily/Winged helix DNA-binding domain"/>
    <property type="match status" value="1"/>
</dbReference>
<dbReference type="HAMAP" id="MF_00015">
    <property type="entry name" value="LexA"/>
    <property type="match status" value="1"/>
</dbReference>
<dbReference type="InterPro" id="IPR011991">
    <property type="entry name" value="ArsR-like_HTH"/>
</dbReference>
<dbReference type="InterPro" id="IPR006200">
    <property type="entry name" value="LexA"/>
</dbReference>
<dbReference type="InterPro" id="IPR039418">
    <property type="entry name" value="LexA-like"/>
</dbReference>
<dbReference type="InterPro" id="IPR036286">
    <property type="entry name" value="LexA/Signal_pep-like_sf"/>
</dbReference>
<dbReference type="InterPro" id="IPR006199">
    <property type="entry name" value="LexA_DNA-bd_dom"/>
</dbReference>
<dbReference type="InterPro" id="IPR050077">
    <property type="entry name" value="LexA_repressor"/>
</dbReference>
<dbReference type="InterPro" id="IPR006197">
    <property type="entry name" value="Peptidase_S24_LexA"/>
</dbReference>
<dbReference type="InterPro" id="IPR015927">
    <property type="entry name" value="Peptidase_S24_S26A/B/C"/>
</dbReference>
<dbReference type="InterPro" id="IPR036388">
    <property type="entry name" value="WH-like_DNA-bd_sf"/>
</dbReference>
<dbReference type="InterPro" id="IPR036390">
    <property type="entry name" value="WH_DNA-bd_sf"/>
</dbReference>
<dbReference type="NCBIfam" id="TIGR00498">
    <property type="entry name" value="lexA"/>
    <property type="match status" value="1"/>
</dbReference>
<dbReference type="PANTHER" id="PTHR33516">
    <property type="entry name" value="LEXA REPRESSOR"/>
    <property type="match status" value="1"/>
</dbReference>
<dbReference type="PANTHER" id="PTHR33516:SF2">
    <property type="entry name" value="LEXA REPRESSOR-RELATED"/>
    <property type="match status" value="1"/>
</dbReference>
<dbReference type="Pfam" id="PF01726">
    <property type="entry name" value="LexA_DNA_bind"/>
    <property type="match status" value="1"/>
</dbReference>
<dbReference type="Pfam" id="PF00717">
    <property type="entry name" value="Peptidase_S24"/>
    <property type="match status" value="1"/>
</dbReference>
<dbReference type="PRINTS" id="PR00726">
    <property type="entry name" value="LEXASERPTASE"/>
</dbReference>
<dbReference type="SUPFAM" id="SSF51306">
    <property type="entry name" value="LexA/Signal peptidase"/>
    <property type="match status" value="1"/>
</dbReference>
<dbReference type="SUPFAM" id="SSF46785">
    <property type="entry name" value="Winged helix' DNA-binding domain"/>
    <property type="match status" value="1"/>
</dbReference>
<name>LEXA_BACCQ</name>
<evidence type="ECO:0000255" key="1">
    <source>
        <dbReference type="HAMAP-Rule" id="MF_00015"/>
    </source>
</evidence>
<accession>B9IUL2</accession>